<gene>
    <name type="primary">Tex11</name>
    <name evidence="10" type="synonym">Zip4</name>
</gene>
<protein>
    <recommendedName>
        <fullName>Testis-expressed protein 11</fullName>
    </recommendedName>
    <alternativeName>
        <fullName evidence="10">Protein ZIP4 homolog</fullName>
        <shortName>ZIP4H</shortName>
    </alternativeName>
</protein>
<proteinExistence type="evidence at protein level"/>
<keyword id="KW-0025">Alternative splicing</keyword>
<keyword id="KW-0158">Chromosome</keyword>
<keyword id="KW-0469">Meiosis</keyword>
<keyword id="KW-1185">Reference proteome</keyword>
<name>TEX11_MOUSE</name>
<comment type="function">
    <text evidence="3 4">Regulator of crossing-over during meiosis. Involved in initiation and/or maintenance of chromosome synapsis and formation of crossovers.</text>
</comment>
<comment type="subunit">
    <text evidence="1 3 5 8">Interacts with SYCP2 (PubMed:18316482). Interacts with PBXIP1; may prevent interaction between PBXIP1 and ESR2 (PubMed:22383461). Interacts with SHOC1 (By similarity). Interacts with REDIC1.</text>
</comment>
<comment type="subcellular location">
    <subcellularLocation>
        <location evidence="3 4 6 7">Chromosome</location>
    </subcellularLocation>
    <text>Forms arrays of discrete foci along synaptonemal complexes in spermatocytes and fetal oocytes.</text>
</comment>
<comment type="alternative products">
    <event type="alternative splicing"/>
    <isoform>
        <id>Q14AT2-1</id>
        <name>1</name>
        <sequence type="displayed"/>
    </isoform>
    <isoform>
        <id>Q14AT2-2</id>
        <name>2</name>
        <sequence type="described" ref="VSP_027262 VSP_027263"/>
    </isoform>
</comment>
<comment type="tissue specificity">
    <text evidence="2 3 4">Testis-specific.</text>
</comment>
<comment type="developmental stage">
    <text evidence="3 4">In spermatocytes, not observed on asynapsed chromosomes in leptotene and appears on synapsed regions in zygotene and on the fully synapsed chromosomes in early pachytene. Disappears in late pachytene and is not observed in diplotene spermatocytes. A similar localization is detected on female meiotic chromosomes (at protein level).</text>
</comment>
<comment type="disruption phenotype">
    <text evidence="3 4">Defects in meiotic double-strand breaks (DSBs) repair and reduced crossover formation. However, discrepancies exist between the different reports. According to a report, deletion induces male sterility (PubMed:18316482). Females are fertile with reduced litter. Adult mice show an arrest in male meiosis and aberrant chromosome segregation in anaphase spermatocytes. Chromosomal asynapsis and reduced crossover formation are observed, leading to elimination of spermatocytes at the pachytene and anaphase I stages (PubMed:18316482). According to another report, both male and female mice are fertile and produce normal-sized litters with normal Mendelian ratios (PubMed:18369460).</text>
</comment>
<comment type="miscellaneous">
    <text evidence="12">Represent the only meiosis-specific factor encoded by the chromosome X in mouse.</text>
</comment>
<comment type="similarity">
    <text evidence="11">Belongs to the SPO22 family.</text>
</comment>
<sequence>MDRITDFYFLDFRESVKTLIITGNSWRLQEMIDRFFTNISNFNRESLTEIQNIQIEEIAVNLWNWAVTKRVELSVRKNQAAKLCYIACKLVYMHGISVSSEEAIQRQILMNIKTGKEWLYTGNAQIADEFFQAAMTDLERLYVRLMQSCYTEANVCVYKMIVEKGIFHVLSYQAESAVAQGDFKKASMCVLRCKDMLMRLPNMTKYLHVLCYNLGIEASKRNKYKESSFWLGQSYEIGKMDRRSVEPQMLAKTLRLLATIYLNCGGEAYYTKAFIAILIANKEHLHPAGLFLKMRILMKGNSCNEELLEAAKEILYLAMPLEFYLSIIQFLIDNKRESVGFRFLRIISDNFKSPEDRKRILLFYIDTLLQKDQDMIAEEKIKDVLKGYQTRSRLSRDLVNWLHNILWGKASRSVKVQKYADALHWYSYSLKLYEYDKADLDLIKLKRNMVSCYLSLKQLDKAKEAIAEVEQKDPTHVFTRYYIFKIAIMEGDAFRALQVVSALKKSLMDGESEDRGLIEAGVSTLTILSLSIDFALENGQQFVAERALEYLCQLSKDPKEVLGGLKCLMRIILPQAFHMPESEYKKKEMGRLWNYLNTALLKFSEYFNEAPSTLDYMVNDANWFRKIAWNLAVQSEKDLEAMKNFFMVSYKLSLFCPLDQGLLIAQKTCLLVAAAVDLDRGRKAPTICEQNMLLRTALEQIKKCKKVWNLLKKTGDFSGDDCGVLLLLYEFEVKTKTNDPSLSRFVDSVWKMPDLECRTLETMALLAMDKPAYYPTIAHKAMKKLLLMYRKQEPVDVLKYSVCMHNLIKLLVADEVWNISLYPLKEVQSHFKNTLSIIRQNEGYPEEEIVWLMIKSWNIGILMSSKNKYISAERWAAMALDFLGHLSTLKTSYEAKVNLLYANLMEILDKKTDLRSTEMTEQLRALIVPPEDQGSVSSTNVAAQNHL</sequence>
<organism>
    <name type="scientific">Mus musculus</name>
    <name type="common">Mouse</name>
    <dbReference type="NCBI Taxonomy" id="10090"/>
    <lineage>
        <taxon>Eukaryota</taxon>
        <taxon>Metazoa</taxon>
        <taxon>Chordata</taxon>
        <taxon>Craniata</taxon>
        <taxon>Vertebrata</taxon>
        <taxon>Euteleostomi</taxon>
        <taxon>Mammalia</taxon>
        <taxon>Eutheria</taxon>
        <taxon>Euarchontoglires</taxon>
        <taxon>Glires</taxon>
        <taxon>Rodentia</taxon>
        <taxon>Myomorpha</taxon>
        <taxon>Muroidea</taxon>
        <taxon>Muridae</taxon>
        <taxon>Murinae</taxon>
        <taxon>Mus</taxon>
        <taxon>Mus</taxon>
    </lineage>
</organism>
<reference key="1">
    <citation type="journal article" date="2001" name="Nat. Genet.">
        <title>An abundance of X-linked genes expressed in spermatogonia.</title>
        <authorList>
            <person name="Wang P.J."/>
            <person name="McCarrey J.R."/>
            <person name="Yang F."/>
            <person name="Page D.C."/>
        </authorList>
    </citation>
    <scope>NUCLEOTIDE SEQUENCE [MRNA] (ISOFORM 1)</scope>
    <scope>TISSUE SPECIFICITY</scope>
    <source>
        <tissue>Testis</tissue>
    </source>
</reference>
<reference key="2">
    <citation type="journal article" date="2005" name="Science">
        <title>The transcriptional landscape of the mammalian genome.</title>
        <authorList>
            <person name="Carninci P."/>
            <person name="Kasukawa T."/>
            <person name="Katayama S."/>
            <person name="Gough J."/>
            <person name="Frith M.C."/>
            <person name="Maeda N."/>
            <person name="Oyama R."/>
            <person name="Ravasi T."/>
            <person name="Lenhard B."/>
            <person name="Wells C."/>
            <person name="Kodzius R."/>
            <person name="Shimokawa K."/>
            <person name="Bajic V.B."/>
            <person name="Brenner S.E."/>
            <person name="Batalov S."/>
            <person name="Forrest A.R."/>
            <person name="Zavolan M."/>
            <person name="Davis M.J."/>
            <person name="Wilming L.G."/>
            <person name="Aidinis V."/>
            <person name="Allen J.E."/>
            <person name="Ambesi-Impiombato A."/>
            <person name="Apweiler R."/>
            <person name="Aturaliya R.N."/>
            <person name="Bailey T.L."/>
            <person name="Bansal M."/>
            <person name="Baxter L."/>
            <person name="Beisel K.W."/>
            <person name="Bersano T."/>
            <person name="Bono H."/>
            <person name="Chalk A.M."/>
            <person name="Chiu K.P."/>
            <person name="Choudhary V."/>
            <person name="Christoffels A."/>
            <person name="Clutterbuck D.R."/>
            <person name="Crowe M.L."/>
            <person name="Dalla E."/>
            <person name="Dalrymple B.P."/>
            <person name="de Bono B."/>
            <person name="Della Gatta G."/>
            <person name="di Bernardo D."/>
            <person name="Down T."/>
            <person name="Engstrom P."/>
            <person name="Fagiolini M."/>
            <person name="Faulkner G."/>
            <person name="Fletcher C.F."/>
            <person name="Fukushima T."/>
            <person name="Furuno M."/>
            <person name="Futaki S."/>
            <person name="Gariboldi M."/>
            <person name="Georgii-Hemming P."/>
            <person name="Gingeras T.R."/>
            <person name="Gojobori T."/>
            <person name="Green R.E."/>
            <person name="Gustincich S."/>
            <person name="Harbers M."/>
            <person name="Hayashi Y."/>
            <person name="Hensch T.K."/>
            <person name="Hirokawa N."/>
            <person name="Hill D."/>
            <person name="Huminiecki L."/>
            <person name="Iacono M."/>
            <person name="Ikeo K."/>
            <person name="Iwama A."/>
            <person name="Ishikawa T."/>
            <person name="Jakt M."/>
            <person name="Kanapin A."/>
            <person name="Katoh M."/>
            <person name="Kawasawa Y."/>
            <person name="Kelso J."/>
            <person name="Kitamura H."/>
            <person name="Kitano H."/>
            <person name="Kollias G."/>
            <person name="Krishnan S.P."/>
            <person name="Kruger A."/>
            <person name="Kummerfeld S.K."/>
            <person name="Kurochkin I.V."/>
            <person name="Lareau L.F."/>
            <person name="Lazarevic D."/>
            <person name="Lipovich L."/>
            <person name="Liu J."/>
            <person name="Liuni S."/>
            <person name="McWilliam S."/>
            <person name="Madan Babu M."/>
            <person name="Madera M."/>
            <person name="Marchionni L."/>
            <person name="Matsuda H."/>
            <person name="Matsuzawa S."/>
            <person name="Miki H."/>
            <person name="Mignone F."/>
            <person name="Miyake S."/>
            <person name="Morris K."/>
            <person name="Mottagui-Tabar S."/>
            <person name="Mulder N."/>
            <person name="Nakano N."/>
            <person name="Nakauchi H."/>
            <person name="Ng P."/>
            <person name="Nilsson R."/>
            <person name="Nishiguchi S."/>
            <person name="Nishikawa S."/>
            <person name="Nori F."/>
            <person name="Ohara O."/>
            <person name="Okazaki Y."/>
            <person name="Orlando V."/>
            <person name="Pang K.C."/>
            <person name="Pavan W.J."/>
            <person name="Pavesi G."/>
            <person name="Pesole G."/>
            <person name="Petrovsky N."/>
            <person name="Piazza S."/>
            <person name="Reed J."/>
            <person name="Reid J.F."/>
            <person name="Ring B.Z."/>
            <person name="Ringwald M."/>
            <person name="Rost B."/>
            <person name="Ruan Y."/>
            <person name="Salzberg S.L."/>
            <person name="Sandelin A."/>
            <person name="Schneider C."/>
            <person name="Schoenbach C."/>
            <person name="Sekiguchi K."/>
            <person name="Semple C.A."/>
            <person name="Seno S."/>
            <person name="Sessa L."/>
            <person name="Sheng Y."/>
            <person name="Shibata Y."/>
            <person name="Shimada H."/>
            <person name="Shimada K."/>
            <person name="Silva D."/>
            <person name="Sinclair B."/>
            <person name="Sperling S."/>
            <person name="Stupka E."/>
            <person name="Sugiura K."/>
            <person name="Sultana R."/>
            <person name="Takenaka Y."/>
            <person name="Taki K."/>
            <person name="Tammoja K."/>
            <person name="Tan S.L."/>
            <person name="Tang S."/>
            <person name="Taylor M.S."/>
            <person name="Tegner J."/>
            <person name="Teichmann S.A."/>
            <person name="Ueda H.R."/>
            <person name="van Nimwegen E."/>
            <person name="Verardo R."/>
            <person name="Wei C.L."/>
            <person name="Yagi K."/>
            <person name="Yamanishi H."/>
            <person name="Zabarovsky E."/>
            <person name="Zhu S."/>
            <person name="Zimmer A."/>
            <person name="Hide W."/>
            <person name="Bult C."/>
            <person name="Grimmond S.M."/>
            <person name="Teasdale R.D."/>
            <person name="Liu E.T."/>
            <person name="Brusic V."/>
            <person name="Quackenbush J."/>
            <person name="Wahlestedt C."/>
            <person name="Mattick J.S."/>
            <person name="Hume D.A."/>
            <person name="Kai C."/>
            <person name="Sasaki D."/>
            <person name="Tomaru Y."/>
            <person name="Fukuda S."/>
            <person name="Kanamori-Katayama M."/>
            <person name="Suzuki M."/>
            <person name="Aoki J."/>
            <person name="Arakawa T."/>
            <person name="Iida J."/>
            <person name="Imamura K."/>
            <person name="Itoh M."/>
            <person name="Kato T."/>
            <person name="Kawaji H."/>
            <person name="Kawagashira N."/>
            <person name="Kawashima T."/>
            <person name="Kojima M."/>
            <person name="Kondo S."/>
            <person name="Konno H."/>
            <person name="Nakano K."/>
            <person name="Ninomiya N."/>
            <person name="Nishio T."/>
            <person name="Okada M."/>
            <person name="Plessy C."/>
            <person name="Shibata K."/>
            <person name="Shiraki T."/>
            <person name="Suzuki S."/>
            <person name="Tagami M."/>
            <person name="Waki K."/>
            <person name="Watahiki A."/>
            <person name="Okamura-Oho Y."/>
            <person name="Suzuki H."/>
            <person name="Kawai J."/>
            <person name="Hayashizaki Y."/>
        </authorList>
    </citation>
    <scope>NUCLEOTIDE SEQUENCE [LARGE SCALE MRNA] (ISOFORM 2)</scope>
    <source>
        <strain>C57BL/6J</strain>
    </source>
</reference>
<reference key="3">
    <citation type="journal article" date="2009" name="PLoS Biol.">
        <title>Lineage-specific biology revealed by a finished genome assembly of the mouse.</title>
        <authorList>
            <person name="Church D.M."/>
            <person name="Goodstadt L."/>
            <person name="Hillier L.W."/>
            <person name="Zody M.C."/>
            <person name="Goldstein S."/>
            <person name="She X."/>
            <person name="Bult C.J."/>
            <person name="Agarwala R."/>
            <person name="Cherry J.L."/>
            <person name="DiCuccio M."/>
            <person name="Hlavina W."/>
            <person name="Kapustin Y."/>
            <person name="Meric P."/>
            <person name="Maglott D."/>
            <person name="Birtle Z."/>
            <person name="Marques A.C."/>
            <person name="Graves T."/>
            <person name="Zhou S."/>
            <person name="Teague B."/>
            <person name="Potamousis K."/>
            <person name="Churas C."/>
            <person name="Place M."/>
            <person name="Herschleb J."/>
            <person name="Runnheim R."/>
            <person name="Forrest D."/>
            <person name="Amos-Landgraf J."/>
            <person name="Schwartz D.C."/>
            <person name="Cheng Z."/>
            <person name="Lindblad-Toh K."/>
            <person name="Eichler E.E."/>
            <person name="Ponting C.P."/>
        </authorList>
    </citation>
    <scope>NUCLEOTIDE SEQUENCE [LARGE SCALE GENOMIC DNA]</scope>
    <source>
        <strain>C57BL/6J</strain>
    </source>
</reference>
<reference key="4">
    <citation type="journal article" date="2004" name="Genome Res.">
        <title>The status, quality, and expansion of the NIH full-length cDNA project: the Mammalian Gene Collection (MGC).</title>
        <authorList>
            <consortium name="The MGC Project Team"/>
        </authorList>
    </citation>
    <scope>NUCLEOTIDE SEQUENCE [LARGE SCALE MRNA] (ISOFORM 1)</scope>
</reference>
<reference key="5">
    <citation type="journal article" date="2008" name="Genes Dev.">
        <title>Meiotic failure in male mice lacking an X-linked factor.</title>
        <authorList>
            <person name="Yang F."/>
            <person name="Gell K."/>
            <person name="van der Heijden G.W."/>
            <person name="Eckardt S."/>
            <person name="Leu N.A."/>
            <person name="Page D.C."/>
            <person name="Benavente R."/>
            <person name="Her C."/>
            <person name="Hoog C."/>
            <person name="McLaughlin K.J."/>
            <person name="Wang P.J."/>
        </authorList>
    </citation>
    <scope>FUNCTION</scope>
    <scope>SUBCELLULAR LOCATION</scope>
    <scope>TISSUE SPECIFICITY</scope>
    <scope>DEVELOPMENTAL STAGE</scope>
    <scope>INTERACTION WITH SYCP2</scope>
</reference>
<reference key="6">
    <citation type="journal article" date="2008" name="PLoS Genet.">
        <title>ZIP4H (TEX11) deficiency in the mouse impairs meiotic double strand break repair and the regulation of crossing over.</title>
        <authorList>
            <person name="Adelman C.A."/>
            <person name="Petrini J.H."/>
        </authorList>
    </citation>
    <scope>FUNCTION</scope>
    <scope>SUBCELLULAR LOCATION</scope>
    <scope>TISSUE SPECIFICITY</scope>
    <scope>DEVELOPMENTAL STAGE</scope>
    <scope>DISRUPTION PHENOTYPE</scope>
</reference>
<reference key="7">
    <citation type="journal article" date="2012" name="Mol. Endocrinol.">
        <title>TEX11 modulates germ cell proliferation by competing with estrogen receptor beta for the binding to HPIP.</title>
        <authorList>
            <person name="Yu Y.H."/>
            <person name="Siao F.P."/>
            <person name="Hsu L.C."/>
            <person name="Yen P.H."/>
        </authorList>
    </citation>
    <scope>INTERACTION WITH PBXIP1</scope>
</reference>
<reference key="8">
    <citation type="journal article" date="2018" name="Commun. Biol.">
        <title>Evolutionarily-conserved MZIP2 is essential for crossover formation in mammalian meiosis.</title>
        <authorList>
            <person name="Zhang Q."/>
            <person name="Shao J."/>
            <person name="Fan H.Y."/>
            <person name="Yu C."/>
        </authorList>
    </citation>
    <scope>SUBCELLULAR LOCATION</scope>
</reference>
<reference key="9">
    <citation type="journal article" date="2019" name="Sci. Adv.">
        <title>SPO16 binds SHOC1 to promote homologous recombination and crossing-over in meiotic prophase I.</title>
        <authorList>
            <person name="Zhang Q."/>
            <person name="Ji S.Y."/>
            <person name="Busayavalasa K."/>
            <person name="Yu C."/>
        </authorList>
    </citation>
    <scope>SUBCELLULAR LOCATION</scope>
</reference>
<reference key="10">
    <citation type="journal article" date="2023" name="Cell Discov.">
        <title>A novel recombination protein C12ORF40/REDIC1 is required for meiotic crossover formation.</title>
        <authorList>
            <person name="Fan S."/>
            <person name="Wang Y."/>
            <person name="Jiang H."/>
            <person name="Jiang X."/>
            <person name="Zhou J."/>
            <person name="Jiao Y."/>
            <person name="Ye J."/>
            <person name="Xu Z."/>
            <person name="Wang Y."/>
            <person name="Xie X."/>
            <person name="Zhang H."/>
            <person name="Li Y."/>
            <person name="Liu W."/>
            <person name="Zhang X."/>
            <person name="Ma H."/>
            <person name="Shi B."/>
            <person name="Zhang Y."/>
            <person name="Zubair M."/>
            <person name="Shah W."/>
            <person name="Xu Z."/>
            <person name="Xu B."/>
            <person name="Shi Q."/>
        </authorList>
    </citation>
    <scope>INTERACTION WITH REDIC1</scope>
</reference>
<dbReference type="EMBL" id="AF285572">
    <property type="protein sequence ID" value="AAK31951.1"/>
    <property type="molecule type" value="mRNA"/>
</dbReference>
<dbReference type="EMBL" id="AK082794">
    <property type="protein sequence ID" value="BAC38624.1"/>
    <property type="molecule type" value="mRNA"/>
</dbReference>
<dbReference type="EMBL" id="AL672308">
    <property type="status" value="NOT_ANNOTATED_CDS"/>
    <property type="molecule type" value="Genomic_DNA"/>
</dbReference>
<dbReference type="EMBL" id="BX005480">
    <property type="status" value="NOT_ANNOTATED_CDS"/>
    <property type="molecule type" value="Genomic_DNA"/>
</dbReference>
<dbReference type="EMBL" id="BX072567">
    <property type="status" value="NOT_ANNOTATED_CDS"/>
    <property type="molecule type" value="Genomic_DNA"/>
</dbReference>
<dbReference type="EMBL" id="BC116709">
    <property type="protein sequence ID" value="AAI16710.1"/>
    <property type="molecule type" value="mRNA"/>
</dbReference>
<dbReference type="CCDS" id="CCDS30308.1">
    <molecule id="Q14AT2-1"/>
</dbReference>
<dbReference type="CCDS" id="CCDS53150.1">
    <molecule id="Q14AT2-2"/>
</dbReference>
<dbReference type="RefSeq" id="NP_001161469.1">
    <molecule id="Q14AT2-2"/>
    <property type="nucleotide sequence ID" value="NM_001167997.1"/>
</dbReference>
<dbReference type="RefSeq" id="NP_113561.2">
    <molecule id="Q14AT2-1"/>
    <property type="nucleotide sequence ID" value="NM_031384.2"/>
</dbReference>
<dbReference type="BioGRID" id="219944">
    <property type="interactions" value="3"/>
</dbReference>
<dbReference type="FunCoup" id="Q14AT2">
    <property type="interactions" value="81"/>
</dbReference>
<dbReference type="STRING" id="10090.ENSMUSP00000009814"/>
<dbReference type="iPTMnet" id="Q14AT2"/>
<dbReference type="PhosphoSitePlus" id="Q14AT2"/>
<dbReference type="PaxDb" id="10090-ENSMUSP00000109345"/>
<dbReference type="ProteomicsDB" id="262760">
    <molecule id="Q14AT2-1"/>
</dbReference>
<dbReference type="ProteomicsDB" id="262761">
    <molecule id="Q14AT2-2"/>
</dbReference>
<dbReference type="Antibodypedia" id="508">
    <property type="antibodies" value="83 antibodies from 26 providers"/>
</dbReference>
<dbReference type="DNASU" id="83558"/>
<dbReference type="Ensembl" id="ENSMUST00000009814.10">
    <molecule id="Q14AT2-1"/>
    <property type="protein sequence ID" value="ENSMUSP00000009814.4"/>
    <property type="gene ID" value="ENSMUSG00000009670.12"/>
</dbReference>
<dbReference type="Ensembl" id="ENSMUST00000113716.3">
    <molecule id="Q14AT2-2"/>
    <property type="protein sequence ID" value="ENSMUSP00000109345.3"/>
    <property type="gene ID" value="ENSMUSG00000009670.12"/>
</dbReference>
<dbReference type="Ensembl" id="ENSMUST00000113718.8">
    <molecule id="Q14AT2-1"/>
    <property type="protein sequence ID" value="ENSMUSP00000109347.2"/>
    <property type="gene ID" value="ENSMUSG00000009670.12"/>
</dbReference>
<dbReference type="GeneID" id="83558"/>
<dbReference type="KEGG" id="mmu:83558"/>
<dbReference type="UCSC" id="uc009tws.2">
    <molecule id="Q14AT2-1"/>
    <property type="organism name" value="mouse"/>
</dbReference>
<dbReference type="UCSC" id="uc012hmv.1">
    <molecule id="Q14AT2-2"/>
    <property type="organism name" value="mouse"/>
</dbReference>
<dbReference type="AGR" id="MGI:1933237"/>
<dbReference type="CTD" id="56159"/>
<dbReference type="MGI" id="MGI:1933237">
    <property type="gene designation" value="Tex11"/>
</dbReference>
<dbReference type="VEuPathDB" id="HostDB:ENSMUSG00000009670"/>
<dbReference type="eggNOG" id="KOG4814">
    <property type="taxonomic scope" value="Eukaryota"/>
</dbReference>
<dbReference type="GeneTree" id="ENSGT00390000006492"/>
<dbReference type="HOGENOM" id="CLU_018086_0_0_1"/>
<dbReference type="InParanoid" id="Q14AT2"/>
<dbReference type="OMA" id="NYETQMN"/>
<dbReference type="OrthoDB" id="65716at2759"/>
<dbReference type="PhylomeDB" id="Q14AT2"/>
<dbReference type="TreeFam" id="TF333356"/>
<dbReference type="BioGRID-ORCS" id="83558">
    <property type="hits" value="0 hits in 78 CRISPR screens"/>
</dbReference>
<dbReference type="ChiTaRS" id="Tex11">
    <property type="organism name" value="mouse"/>
</dbReference>
<dbReference type="PRO" id="PR:Q14AT2"/>
<dbReference type="Proteomes" id="UP000000589">
    <property type="component" value="Chromosome X"/>
</dbReference>
<dbReference type="RNAct" id="Q14AT2">
    <property type="molecule type" value="protein"/>
</dbReference>
<dbReference type="Bgee" id="ENSMUSG00000009670">
    <property type="expression patterns" value="Expressed in spermatid and 21 other cell types or tissues"/>
</dbReference>
<dbReference type="GO" id="GO:0000801">
    <property type="term" value="C:central element"/>
    <property type="evidence" value="ECO:0000314"/>
    <property type="project" value="MGI"/>
</dbReference>
<dbReference type="GO" id="GO:0005694">
    <property type="term" value="C:chromosome"/>
    <property type="evidence" value="ECO:0000314"/>
    <property type="project" value="UniProtKB"/>
</dbReference>
<dbReference type="GO" id="GO:0000794">
    <property type="term" value="C:condensed nuclear chromosome"/>
    <property type="evidence" value="ECO:0000314"/>
    <property type="project" value="MGI"/>
</dbReference>
<dbReference type="GO" id="GO:0006915">
    <property type="term" value="P:apoptotic process"/>
    <property type="evidence" value="ECO:0000315"/>
    <property type="project" value="MGI"/>
</dbReference>
<dbReference type="GO" id="GO:0051026">
    <property type="term" value="P:chiasma assembly"/>
    <property type="evidence" value="ECO:0000315"/>
    <property type="project" value="MGI"/>
</dbReference>
<dbReference type="GO" id="GO:0035234">
    <property type="term" value="P:ectopic germ cell programmed cell death"/>
    <property type="evidence" value="ECO:0000315"/>
    <property type="project" value="MGI"/>
</dbReference>
<dbReference type="GO" id="GO:0009566">
    <property type="term" value="P:fertilization"/>
    <property type="evidence" value="ECO:0000315"/>
    <property type="project" value="MGI"/>
</dbReference>
<dbReference type="GO" id="GO:0008584">
    <property type="term" value="P:male gonad development"/>
    <property type="evidence" value="ECO:0000315"/>
    <property type="project" value="MGI"/>
</dbReference>
<dbReference type="GO" id="GO:0007060">
    <property type="term" value="P:male meiosis chromosome segregation"/>
    <property type="evidence" value="ECO:0000315"/>
    <property type="project" value="MGI"/>
</dbReference>
<dbReference type="GO" id="GO:0007140">
    <property type="term" value="P:male meiotic nuclear division"/>
    <property type="evidence" value="ECO:0000315"/>
    <property type="project" value="MGI"/>
</dbReference>
<dbReference type="GO" id="GO:0006311">
    <property type="term" value="P:meiotic gene conversion"/>
    <property type="evidence" value="ECO:0000315"/>
    <property type="project" value="UniProtKB"/>
</dbReference>
<dbReference type="GO" id="GO:0043066">
    <property type="term" value="P:negative regulation of apoptotic process"/>
    <property type="evidence" value="ECO:0000315"/>
    <property type="project" value="MGI"/>
</dbReference>
<dbReference type="GO" id="GO:0051093">
    <property type="term" value="P:negative regulation of developmental process"/>
    <property type="evidence" value="ECO:0000315"/>
    <property type="project" value="MGI"/>
</dbReference>
<dbReference type="GO" id="GO:2000242">
    <property type="term" value="P:negative regulation of reproductive process"/>
    <property type="evidence" value="ECO:0000315"/>
    <property type="project" value="MGI"/>
</dbReference>
<dbReference type="GO" id="GO:0007131">
    <property type="term" value="P:reciprocal meiotic recombination"/>
    <property type="evidence" value="ECO:0000315"/>
    <property type="project" value="UniProtKB"/>
</dbReference>
<dbReference type="GO" id="GO:0000712">
    <property type="term" value="P:resolution of meiotic recombination intermediates"/>
    <property type="evidence" value="ECO:0000315"/>
    <property type="project" value="MGI"/>
</dbReference>
<dbReference type="GO" id="GO:0007130">
    <property type="term" value="P:synaptonemal complex assembly"/>
    <property type="evidence" value="ECO:0000315"/>
    <property type="project" value="MGI"/>
</dbReference>
<dbReference type="FunFam" id="1.25.40.10:FF:000739">
    <property type="entry name" value="Testis expressed 11"/>
    <property type="match status" value="1"/>
</dbReference>
<dbReference type="Gene3D" id="1.25.40.10">
    <property type="entry name" value="Tetratricopeptide repeat domain"/>
    <property type="match status" value="1"/>
</dbReference>
<dbReference type="InterPro" id="IPR013940">
    <property type="entry name" value="Spo22/ZIP4/TEX11"/>
</dbReference>
<dbReference type="InterPro" id="IPR042861">
    <property type="entry name" value="TEX11"/>
</dbReference>
<dbReference type="InterPro" id="IPR011990">
    <property type="entry name" value="TPR-like_helical_dom_sf"/>
</dbReference>
<dbReference type="PANTHER" id="PTHR47083">
    <property type="entry name" value="TESTIS-EXPRESSED PROTEIN 11"/>
    <property type="match status" value="1"/>
</dbReference>
<dbReference type="PANTHER" id="PTHR47083:SF1">
    <property type="entry name" value="TESTIS-EXPRESSED PROTEIN 11"/>
    <property type="match status" value="1"/>
</dbReference>
<dbReference type="Pfam" id="PF08631">
    <property type="entry name" value="SPO22"/>
    <property type="match status" value="1"/>
</dbReference>
<dbReference type="SUPFAM" id="SSF48452">
    <property type="entry name" value="TPR-like"/>
    <property type="match status" value="1"/>
</dbReference>
<accession>Q14AT2</accession>
<accession>Q8BUS0</accession>
<accession>Q99MW9</accession>
<evidence type="ECO:0000250" key="1">
    <source>
        <dbReference type="UniProtKB" id="Q8IYF3"/>
    </source>
</evidence>
<evidence type="ECO:0000269" key="2">
    <source>
    </source>
</evidence>
<evidence type="ECO:0000269" key="3">
    <source>
    </source>
</evidence>
<evidence type="ECO:0000269" key="4">
    <source>
    </source>
</evidence>
<evidence type="ECO:0000269" key="5">
    <source>
    </source>
</evidence>
<evidence type="ECO:0000269" key="6">
    <source>
    </source>
</evidence>
<evidence type="ECO:0000269" key="7">
    <source>
    </source>
</evidence>
<evidence type="ECO:0000269" key="8">
    <source>
    </source>
</evidence>
<evidence type="ECO:0000303" key="9">
    <source>
    </source>
</evidence>
<evidence type="ECO:0000303" key="10">
    <source>
    </source>
</evidence>
<evidence type="ECO:0000305" key="11"/>
<evidence type="ECO:0000305" key="12">
    <source>
    </source>
</evidence>
<feature type="chain" id="PRO_0000296956" description="Testis-expressed protein 11">
    <location>
        <begin position="1"/>
        <end position="947"/>
    </location>
</feature>
<feature type="splice variant" id="VSP_027262" description="In isoform 2." evidence="9">
    <original>NMLLRTALEQIKKCKKV</original>
    <variation>VSTKCKRGHQTFWNYRW</variation>
    <location>
        <begin position="691"/>
        <end position="707"/>
    </location>
</feature>
<feature type="splice variant" id="VSP_027263" description="In isoform 2." evidence="9">
    <location>
        <begin position="708"/>
        <end position="947"/>
    </location>
</feature>
<feature type="sequence conflict" description="In Ref. 1; AAK31951." evidence="11" ref="1">
    <original>M</original>
    <variation>L</variation>
    <location>
        <position position="188"/>
    </location>
</feature>